<proteinExistence type="inferred from homology"/>
<organism>
    <name type="scientific">Rhodopseudomonas palustris (strain BisA53)</name>
    <dbReference type="NCBI Taxonomy" id="316055"/>
    <lineage>
        <taxon>Bacteria</taxon>
        <taxon>Pseudomonadati</taxon>
        <taxon>Pseudomonadota</taxon>
        <taxon>Alphaproteobacteria</taxon>
        <taxon>Hyphomicrobiales</taxon>
        <taxon>Nitrobacteraceae</taxon>
        <taxon>Rhodopseudomonas</taxon>
    </lineage>
</organism>
<keyword id="KW-0067">ATP-binding</keyword>
<keyword id="KW-0143">Chaperone</keyword>
<keyword id="KW-0963">Cytoplasm</keyword>
<keyword id="KW-0413">Isomerase</keyword>
<keyword id="KW-0547">Nucleotide-binding</keyword>
<protein>
    <recommendedName>
        <fullName evidence="1">Chaperonin GroEL 1</fullName>
        <ecNumber evidence="1">5.6.1.7</ecNumber>
    </recommendedName>
    <alternativeName>
        <fullName evidence="1">60 kDa chaperonin 1</fullName>
    </alternativeName>
    <alternativeName>
        <fullName evidence="1">Chaperonin-60 1</fullName>
        <shortName evidence="1">Cpn60 1</shortName>
    </alternativeName>
</protein>
<dbReference type="EC" id="5.6.1.7" evidence="1"/>
<dbReference type="EMBL" id="CP000463">
    <property type="protein sequence ID" value="ABJ04817.1"/>
    <property type="molecule type" value="Genomic_DNA"/>
</dbReference>
<dbReference type="SMR" id="Q07TB7"/>
<dbReference type="STRING" id="316055.RPE_0861"/>
<dbReference type="KEGG" id="rpe:RPE_0861"/>
<dbReference type="eggNOG" id="COG0459">
    <property type="taxonomic scope" value="Bacteria"/>
</dbReference>
<dbReference type="HOGENOM" id="CLU_016503_3_0_5"/>
<dbReference type="OrthoDB" id="9766614at2"/>
<dbReference type="GO" id="GO:0005737">
    <property type="term" value="C:cytoplasm"/>
    <property type="evidence" value="ECO:0007669"/>
    <property type="project" value="UniProtKB-SubCell"/>
</dbReference>
<dbReference type="GO" id="GO:0005524">
    <property type="term" value="F:ATP binding"/>
    <property type="evidence" value="ECO:0007669"/>
    <property type="project" value="UniProtKB-UniRule"/>
</dbReference>
<dbReference type="GO" id="GO:0140662">
    <property type="term" value="F:ATP-dependent protein folding chaperone"/>
    <property type="evidence" value="ECO:0007669"/>
    <property type="project" value="InterPro"/>
</dbReference>
<dbReference type="GO" id="GO:0016853">
    <property type="term" value="F:isomerase activity"/>
    <property type="evidence" value="ECO:0007669"/>
    <property type="project" value="UniProtKB-KW"/>
</dbReference>
<dbReference type="GO" id="GO:0051082">
    <property type="term" value="F:unfolded protein binding"/>
    <property type="evidence" value="ECO:0007669"/>
    <property type="project" value="UniProtKB-UniRule"/>
</dbReference>
<dbReference type="GO" id="GO:0042026">
    <property type="term" value="P:protein refolding"/>
    <property type="evidence" value="ECO:0007669"/>
    <property type="project" value="UniProtKB-UniRule"/>
</dbReference>
<dbReference type="CDD" id="cd03344">
    <property type="entry name" value="GroEL"/>
    <property type="match status" value="1"/>
</dbReference>
<dbReference type="FunFam" id="1.10.560.10:FF:000001">
    <property type="entry name" value="60 kDa chaperonin"/>
    <property type="match status" value="1"/>
</dbReference>
<dbReference type="FunFam" id="3.50.7.10:FF:000001">
    <property type="entry name" value="60 kDa chaperonin"/>
    <property type="match status" value="1"/>
</dbReference>
<dbReference type="Gene3D" id="3.50.7.10">
    <property type="entry name" value="GroEL"/>
    <property type="match status" value="1"/>
</dbReference>
<dbReference type="Gene3D" id="1.10.560.10">
    <property type="entry name" value="GroEL-like equatorial domain"/>
    <property type="match status" value="1"/>
</dbReference>
<dbReference type="Gene3D" id="3.30.260.10">
    <property type="entry name" value="TCP-1-like chaperonin intermediate domain"/>
    <property type="match status" value="1"/>
</dbReference>
<dbReference type="HAMAP" id="MF_00600">
    <property type="entry name" value="CH60"/>
    <property type="match status" value="1"/>
</dbReference>
<dbReference type="InterPro" id="IPR018370">
    <property type="entry name" value="Chaperonin_Cpn60_CS"/>
</dbReference>
<dbReference type="InterPro" id="IPR001844">
    <property type="entry name" value="Cpn60/GroEL"/>
</dbReference>
<dbReference type="InterPro" id="IPR002423">
    <property type="entry name" value="Cpn60/GroEL/TCP-1"/>
</dbReference>
<dbReference type="InterPro" id="IPR027409">
    <property type="entry name" value="GroEL-like_apical_dom_sf"/>
</dbReference>
<dbReference type="InterPro" id="IPR027413">
    <property type="entry name" value="GROEL-like_equatorial_sf"/>
</dbReference>
<dbReference type="InterPro" id="IPR027410">
    <property type="entry name" value="TCP-1-like_intermed_sf"/>
</dbReference>
<dbReference type="NCBIfam" id="TIGR02348">
    <property type="entry name" value="GroEL"/>
    <property type="match status" value="1"/>
</dbReference>
<dbReference type="NCBIfam" id="NF000592">
    <property type="entry name" value="PRK00013.1"/>
    <property type="match status" value="1"/>
</dbReference>
<dbReference type="NCBIfam" id="NF009487">
    <property type="entry name" value="PRK12849.1"/>
    <property type="match status" value="1"/>
</dbReference>
<dbReference type="NCBIfam" id="NF009488">
    <property type="entry name" value="PRK12850.1"/>
    <property type="match status" value="1"/>
</dbReference>
<dbReference type="NCBIfam" id="NF009489">
    <property type="entry name" value="PRK12851.1"/>
    <property type="match status" value="1"/>
</dbReference>
<dbReference type="PANTHER" id="PTHR45633">
    <property type="entry name" value="60 KDA HEAT SHOCK PROTEIN, MITOCHONDRIAL"/>
    <property type="match status" value="1"/>
</dbReference>
<dbReference type="Pfam" id="PF00118">
    <property type="entry name" value="Cpn60_TCP1"/>
    <property type="match status" value="1"/>
</dbReference>
<dbReference type="PRINTS" id="PR00298">
    <property type="entry name" value="CHAPERONIN60"/>
</dbReference>
<dbReference type="SUPFAM" id="SSF52029">
    <property type="entry name" value="GroEL apical domain-like"/>
    <property type="match status" value="1"/>
</dbReference>
<dbReference type="SUPFAM" id="SSF48592">
    <property type="entry name" value="GroEL equatorial domain-like"/>
    <property type="match status" value="1"/>
</dbReference>
<dbReference type="SUPFAM" id="SSF54849">
    <property type="entry name" value="GroEL-intermediate domain like"/>
    <property type="match status" value="1"/>
</dbReference>
<dbReference type="PROSITE" id="PS00296">
    <property type="entry name" value="CHAPERONINS_CPN60"/>
    <property type="match status" value="1"/>
</dbReference>
<reference key="1">
    <citation type="submission" date="2006-09" db="EMBL/GenBank/DDBJ databases">
        <title>Complete sequence of Rhodopseudomonas palustris BisA53.</title>
        <authorList>
            <consortium name="US DOE Joint Genome Institute"/>
            <person name="Copeland A."/>
            <person name="Lucas S."/>
            <person name="Lapidus A."/>
            <person name="Barry K."/>
            <person name="Detter J.C."/>
            <person name="Glavina del Rio T."/>
            <person name="Hammon N."/>
            <person name="Israni S."/>
            <person name="Dalin E."/>
            <person name="Tice H."/>
            <person name="Pitluck S."/>
            <person name="Chain P."/>
            <person name="Malfatti S."/>
            <person name="Shin M."/>
            <person name="Vergez L."/>
            <person name="Schmutz J."/>
            <person name="Larimer F."/>
            <person name="Land M."/>
            <person name="Hauser L."/>
            <person name="Pelletier D.A."/>
            <person name="Kyrpides N."/>
            <person name="Kim E."/>
            <person name="Harwood C.S."/>
            <person name="Oda Y."/>
            <person name="Richardson P."/>
        </authorList>
    </citation>
    <scope>NUCLEOTIDE SEQUENCE [LARGE SCALE GENOMIC DNA]</scope>
    <source>
        <strain>BisA53</strain>
    </source>
</reference>
<feature type="chain" id="PRO_0000332059" description="Chaperonin GroEL 1">
    <location>
        <begin position="1"/>
        <end position="547"/>
    </location>
</feature>
<feature type="binding site" evidence="1">
    <location>
        <begin position="30"/>
        <end position="33"/>
    </location>
    <ligand>
        <name>ATP</name>
        <dbReference type="ChEBI" id="CHEBI:30616"/>
    </ligand>
</feature>
<feature type="binding site" evidence="1">
    <location>
        <position position="51"/>
    </location>
    <ligand>
        <name>ATP</name>
        <dbReference type="ChEBI" id="CHEBI:30616"/>
    </ligand>
</feature>
<feature type="binding site" evidence="1">
    <location>
        <begin position="87"/>
        <end position="91"/>
    </location>
    <ligand>
        <name>ATP</name>
        <dbReference type="ChEBI" id="CHEBI:30616"/>
    </ligand>
</feature>
<feature type="binding site" evidence="1">
    <location>
        <position position="415"/>
    </location>
    <ligand>
        <name>ATP</name>
        <dbReference type="ChEBI" id="CHEBI:30616"/>
    </ligand>
</feature>
<feature type="binding site" evidence="1">
    <location>
        <position position="496"/>
    </location>
    <ligand>
        <name>ATP</name>
        <dbReference type="ChEBI" id="CHEBI:30616"/>
    </ligand>
</feature>
<name>CH601_RHOP5</name>
<gene>
    <name evidence="1" type="primary">groEL1</name>
    <name evidence="1" type="synonym">groL1</name>
    <name type="ordered locus">RPE_0861</name>
</gene>
<evidence type="ECO:0000255" key="1">
    <source>
        <dbReference type="HAMAP-Rule" id="MF_00600"/>
    </source>
</evidence>
<accession>Q07TB7</accession>
<sequence>MAAKDVKFSQDARDRMLRGVDILANAVKVTLGPKGRNVLIERSFGAPRITKDGVTVAKEIQLEDKFENMGAQMLREVASKTNDLAGDGTTTATVLAQSIVREGAKAVAAGMNPMDLKRGIEIAVAAVVKDIEKRAKPVASSAEIAQVGTISSNGDAAIGKMIAQAMQKVGNEGVITVEENKSLTTEVDIVEGMKFDRGYLSPYFVTNAEKMAVEFDDAYVLLHEKKVSGLQSMLPLLEAVVQAGKPLVIIAEDVEGEALATLVVNRLRGGLKVAAVKAPGFGDRRKAMMEDIAILTGGQLISDDLGMKLENVTLKMLGRAKKVVIDKENTTIVGGAGKKADIESRVGQIKAQIEETSSDYDREKLQERLAKLAGGVAVIRVGGATEVEVKEKKDRVEDALNATRAAVQEGIVPGGGVALLRAKKAVGRINNDNADVQAGINIVLKALEAPIRQIAENAGVEGSIVVGKILENKSETFGFDAQTEEYVDMLAKGIVDPAKVVRTALQDAASVSALLVTTEAMVAELPRDAAPAMPGGGGMGGMGGMGF</sequence>
<comment type="function">
    <text evidence="1">Together with its co-chaperonin GroES, plays an essential role in assisting protein folding. The GroEL-GroES system forms a nano-cage that allows encapsulation of the non-native substrate proteins and provides a physical environment optimized to promote and accelerate protein folding.</text>
</comment>
<comment type="catalytic activity">
    <reaction evidence="1">
        <text>ATP + H2O + a folded polypeptide = ADP + phosphate + an unfolded polypeptide.</text>
        <dbReference type="EC" id="5.6.1.7"/>
    </reaction>
</comment>
<comment type="subunit">
    <text evidence="1">Forms a cylinder of 14 subunits composed of two heptameric rings stacked back-to-back. Interacts with the co-chaperonin GroES.</text>
</comment>
<comment type="subcellular location">
    <subcellularLocation>
        <location evidence="1">Cytoplasm</location>
    </subcellularLocation>
</comment>
<comment type="similarity">
    <text evidence="1">Belongs to the chaperonin (HSP60) family.</text>
</comment>